<evidence type="ECO:0000255" key="1">
    <source>
        <dbReference type="HAMAP-Rule" id="MF_01961"/>
    </source>
</evidence>
<sequence>MKGKTVNKQTLAALVSALLVFNPAVADEQESAQMTKPKGAAATGTAKAFQPKSKQFWWPDQLDLSPLRDHDSRSNPYGESFDYAKAFNSLDLDQVKADIDQLLTQSQDWWPADYGNYGPFFIRMTWHSAGTYRTLDGRGGAGGGQQRFEPLNSWPDNASLDKARRLLWPVKQKYGEALSWSDLIVLAGNVALENMGFKTFGFAGGRNDDWEPDMVYWGPEVEMLASDREDRDGKLQRPLGATHMGLIYVNPEGPKGVPDPLGSAKNIRTAFSRMAMNDEETLALIAGGHTFGKMHGAHKPKDCLGAEPAAAGIEAQGLGWHNKCGKGHSEDTITSGLEGAWTQAPTKWTSLYLSNLLTYDWQQTRSPAGAIQWIPTDESVHKAVPDAHVKGKFHAPVMTTADLALKYDPEYRKIAERFLADPEEYRLAFAKAWYKLTHRDMGPARNFLGKEVPQGNFIWQDPIDDKTQSRLSAGDIKQLKKAISKSGLSVAERVRLAWASAASYRQSDMRGGANGARIALAPQKDWTVNNPAETAKVLKTLEAIRADFNKGAGKRQVSLADLIVLAGASALEQAAKQAGFEVAVPFTPGRGDATQAQTDENSFSLLELHADGFRNYFDVNHSYKSPTEMLVDKADQLDLTVPEMTVLVGGLRALDANYQGAKHGVLTQRPGTLNNDFFVNLLDMSTLWQKSDVDGIYQGLDRSSGKPKWTATSVDLIFGSNSELRAVAEVYAFDTSKQKFVDDFVAAWVKVMNLDR</sequence>
<protein>
    <recommendedName>
        <fullName evidence="1">Catalase-peroxidase</fullName>
        <shortName evidence="1">CP</shortName>
        <ecNumber evidence="1">1.11.1.21</ecNumber>
    </recommendedName>
    <alternativeName>
        <fullName evidence="1">Peroxidase/catalase</fullName>
    </alternativeName>
</protein>
<name>KATG_SHELP</name>
<accession>A3QAT3</accession>
<comment type="function">
    <text evidence="1">Bifunctional enzyme with both catalase and broad-spectrum peroxidase activity.</text>
</comment>
<comment type="catalytic activity">
    <reaction evidence="1">
        <text>H2O2 + AH2 = A + 2 H2O</text>
        <dbReference type="Rhea" id="RHEA:30275"/>
        <dbReference type="ChEBI" id="CHEBI:13193"/>
        <dbReference type="ChEBI" id="CHEBI:15377"/>
        <dbReference type="ChEBI" id="CHEBI:16240"/>
        <dbReference type="ChEBI" id="CHEBI:17499"/>
        <dbReference type="EC" id="1.11.1.21"/>
    </reaction>
</comment>
<comment type="catalytic activity">
    <reaction evidence="1">
        <text>2 H2O2 = O2 + 2 H2O</text>
        <dbReference type="Rhea" id="RHEA:20309"/>
        <dbReference type="ChEBI" id="CHEBI:15377"/>
        <dbReference type="ChEBI" id="CHEBI:15379"/>
        <dbReference type="ChEBI" id="CHEBI:16240"/>
        <dbReference type="EC" id="1.11.1.21"/>
    </reaction>
</comment>
<comment type="cofactor">
    <cofactor evidence="1">
        <name>heme b</name>
        <dbReference type="ChEBI" id="CHEBI:60344"/>
    </cofactor>
    <text evidence="1">Binds 1 heme b (iron(II)-protoporphyrin IX) group per dimer.</text>
</comment>
<comment type="subunit">
    <text evidence="1">Homodimer or homotetramer.</text>
</comment>
<comment type="PTM">
    <text evidence="1">Formation of the three residue Trp-Tyr-Met cross-link is important for the catalase, but not the peroxidase activity of the enzyme.</text>
</comment>
<comment type="similarity">
    <text evidence="1">Belongs to the peroxidase family. Peroxidase/catalase subfamily.</text>
</comment>
<keyword id="KW-0349">Heme</keyword>
<keyword id="KW-0376">Hydrogen peroxide</keyword>
<keyword id="KW-0408">Iron</keyword>
<keyword id="KW-0479">Metal-binding</keyword>
<keyword id="KW-0560">Oxidoreductase</keyword>
<keyword id="KW-0575">Peroxidase</keyword>
<keyword id="KW-1185">Reference proteome</keyword>
<keyword id="KW-0732">Signal</keyword>
<organism>
    <name type="scientific">Shewanella loihica (strain ATCC BAA-1088 / PV-4)</name>
    <dbReference type="NCBI Taxonomy" id="323850"/>
    <lineage>
        <taxon>Bacteria</taxon>
        <taxon>Pseudomonadati</taxon>
        <taxon>Pseudomonadota</taxon>
        <taxon>Gammaproteobacteria</taxon>
        <taxon>Alteromonadales</taxon>
        <taxon>Shewanellaceae</taxon>
        <taxon>Shewanella</taxon>
    </lineage>
</organism>
<feature type="signal peptide" evidence="1">
    <location>
        <begin position="1"/>
        <end position="26"/>
    </location>
</feature>
<feature type="chain" id="PRO_5000228926" description="Catalase-peroxidase">
    <location>
        <begin position="27"/>
        <end position="756"/>
    </location>
</feature>
<feature type="active site" description="Proton acceptor" evidence="1">
    <location>
        <position position="127"/>
    </location>
</feature>
<feature type="binding site" description="axial binding residue" evidence="1">
    <location>
        <position position="289"/>
    </location>
    <ligand>
        <name>heme b</name>
        <dbReference type="ChEBI" id="CHEBI:60344"/>
    </ligand>
    <ligandPart>
        <name>Fe</name>
        <dbReference type="ChEBI" id="CHEBI:18248"/>
    </ligandPart>
</feature>
<feature type="site" description="Transition state stabilizer" evidence="1">
    <location>
        <position position="123"/>
    </location>
</feature>
<feature type="cross-link" description="Tryptophyl-tyrosyl-methioninium (Trp-Tyr) (with M-274)" evidence="1">
    <location>
        <begin position="126"/>
        <end position="248"/>
    </location>
</feature>
<feature type="cross-link" description="Tryptophyl-tyrosyl-methioninium (Tyr-Met) (with W-126)" evidence="1">
    <location>
        <begin position="248"/>
        <end position="274"/>
    </location>
</feature>
<proteinExistence type="inferred from homology"/>
<dbReference type="EC" id="1.11.1.21" evidence="1"/>
<dbReference type="EMBL" id="CP000606">
    <property type="protein sequence ID" value="ABO22581.1"/>
    <property type="molecule type" value="Genomic_DNA"/>
</dbReference>
<dbReference type="RefSeq" id="WP_011864515.1">
    <property type="nucleotide sequence ID" value="NC_009092.1"/>
</dbReference>
<dbReference type="SMR" id="A3QAT3"/>
<dbReference type="STRING" id="323850.Shew_0709"/>
<dbReference type="PeroxiBase" id="3562">
    <property type="entry name" value="SHspCP01_PV-4"/>
</dbReference>
<dbReference type="KEGG" id="slo:Shew_0709"/>
<dbReference type="eggNOG" id="COG0376">
    <property type="taxonomic scope" value="Bacteria"/>
</dbReference>
<dbReference type="HOGENOM" id="CLU_025424_2_0_6"/>
<dbReference type="OrthoDB" id="9759743at2"/>
<dbReference type="Proteomes" id="UP000001558">
    <property type="component" value="Chromosome"/>
</dbReference>
<dbReference type="GO" id="GO:0005829">
    <property type="term" value="C:cytosol"/>
    <property type="evidence" value="ECO:0007669"/>
    <property type="project" value="TreeGrafter"/>
</dbReference>
<dbReference type="GO" id="GO:0004096">
    <property type="term" value="F:catalase activity"/>
    <property type="evidence" value="ECO:0007669"/>
    <property type="project" value="UniProtKB-UniRule"/>
</dbReference>
<dbReference type="GO" id="GO:0020037">
    <property type="term" value="F:heme binding"/>
    <property type="evidence" value="ECO:0007669"/>
    <property type="project" value="InterPro"/>
</dbReference>
<dbReference type="GO" id="GO:0046872">
    <property type="term" value="F:metal ion binding"/>
    <property type="evidence" value="ECO:0007669"/>
    <property type="project" value="UniProtKB-KW"/>
</dbReference>
<dbReference type="GO" id="GO:0070301">
    <property type="term" value="P:cellular response to hydrogen peroxide"/>
    <property type="evidence" value="ECO:0007669"/>
    <property type="project" value="TreeGrafter"/>
</dbReference>
<dbReference type="GO" id="GO:0042744">
    <property type="term" value="P:hydrogen peroxide catabolic process"/>
    <property type="evidence" value="ECO:0007669"/>
    <property type="project" value="UniProtKB-KW"/>
</dbReference>
<dbReference type="CDD" id="cd08200">
    <property type="entry name" value="catalase_peroxidase_2"/>
    <property type="match status" value="1"/>
</dbReference>
<dbReference type="FunFam" id="1.10.420.10:FF:000004">
    <property type="entry name" value="Catalase-peroxidase"/>
    <property type="match status" value="1"/>
</dbReference>
<dbReference type="FunFam" id="1.10.520.10:FF:000002">
    <property type="entry name" value="Catalase-peroxidase"/>
    <property type="match status" value="1"/>
</dbReference>
<dbReference type="Gene3D" id="1.10.520.10">
    <property type="match status" value="2"/>
</dbReference>
<dbReference type="Gene3D" id="1.10.420.10">
    <property type="entry name" value="Peroxidase, domain 2"/>
    <property type="match status" value="2"/>
</dbReference>
<dbReference type="HAMAP" id="MF_01961">
    <property type="entry name" value="Catal_peroxid"/>
    <property type="match status" value="1"/>
</dbReference>
<dbReference type="InterPro" id="IPR000763">
    <property type="entry name" value="Catalase_peroxidase"/>
</dbReference>
<dbReference type="InterPro" id="IPR002016">
    <property type="entry name" value="Haem_peroxidase"/>
</dbReference>
<dbReference type="InterPro" id="IPR010255">
    <property type="entry name" value="Haem_peroxidase_sf"/>
</dbReference>
<dbReference type="InterPro" id="IPR019794">
    <property type="entry name" value="Peroxidases_AS"/>
</dbReference>
<dbReference type="InterPro" id="IPR019793">
    <property type="entry name" value="Peroxidases_heam-ligand_BS"/>
</dbReference>
<dbReference type="NCBIfam" id="TIGR00198">
    <property type="entry name" value="cat_per_HPI"/>
    <property type="match status" value="1"/>
</dbReference>
<dbReference type="NCBIfam" id="NF011635">
    <property type="entry name" value="PRK15061.1"/>
    <property type="match status" value="1"/>
</dbReference>
<dbReference type="PANTHER" id="PTHR30555:SF0">
    <property type="entry name" value="CATALASE-PEROXIDASE"/>
    <property type="match status" value="1"/>
</dbReference>
<dbReference type="PANTHER" id="PTHR30555">
    <property type="entry name" value="HYDROPEROXIDASE I, BIFUNCTIONAL CATALASE-PEROXIDASE"/>
    <property type="match status" value="1"/>
</dbReference>
<dbReference type="Pfam" id="PF00141">
    <property type="entry name" value="peroxidase"/>
    <property type="match status" value="2"/>
</dbReference>
<dbReference type="PRINTS" id="PR00460">
    <property type="entry name" value="BPEROXIDASE"/>
</dbReference>
<dbReference type="PRINTS" id="PR00458">
    <property type="entry name" value="PEROXIDASE"/>
</dbReference>
<dbReference type="SUPFAM" id="SSF48113">
    <property type="entry name" value="Heme-dependent peroxidases"/>
    <property type="match status" value="2"/>
</dbReference>
<dbReference type="PROSITE" id="PS00435">
    <property type="entry name" value="PEROXIDASE_1"/>
    <property type="match status" value="1"/>
</dbReference>
<dbReference type="PROSITE" id="PS00436">
    <property type="entry name" value="PEROXIDASE_2"/>
    <property type="match status" value="1"/>
</dbReference>
<dbReference type="PROSITE" id="PS50873">
    <property type="entry name" value="PEROXIDASE_4"/>
    <property type="match status" value="1"/>
</dbReference>
<reference key="1">
    <citation type="submission" date="2007-03" db="EMBL/GenBank/DDBJ databases">
        <title>Complete sequence of Shewanella loihica PV-4.</title>
        <authorList>
            <consortium name="US DOE Joint Genome Institute"/>
            <person name="Copeland A."/>
            <person name="Lucas S."/>
            <person name="Lapidus A."/>
            <person name="Barry K."/>
            <person name="Detter J.C."/>
            <person name="Glavina del Rio T."/>
            <person name="Hammon N."/>
            <person name="Israni S."/>
            <person name="Dalin E."/>
            <person name="Tice H."/>
            <person name="Pitluck S."/>
            <person name="Chain P."/>
            <person name="Malfatti S."/>
            <person name="Shin M."/>
            <person name="Vergez L."/>
            <person name="Schmutz J."/>
            <person name="Larimer F."/>
            <person name="Land M."/>
            <person name="Hauser L."/>
            <person name="Kyrpides N."/>
            <person name="Mikhailova N."/>
            <person name="Romine M.F."/>
            <person name="Serres G."/>
            <person name="Fredrickson J."/>
            <person name="Tiedje J."/>
            <person name="Richardson P."/>
        </authorList>
    </citation>
    <scope>NUCLEOTIDE SEQUENCE [LARGE SCALE GENOMIC DNA]</scope>
    <source>
        <strain>ATCC BAA-1088 / PV-4</strain>
    </source>
</reference>
<gene>
    <name evidence="1" type="primary">katG</name>
    <name type="ordered locus">Shew_0709</name>
</gene>